<accession>Q0TQK2</accession>
<proteinExistence type="inferred from homology"/>
<name>CLPP_CLOP1</name>
<evidence type="ECO:0000255" key="1">
    <source>
        <dbReference type="HAMAP-Rule" id="MF_00444"/>
    </source>
</evidence>
<organism>
    <name type="scientific">Clostridium perfringens (strain ATCC 13124 / DSM 756 / JCM 1290 / NCIMB 6125 / NCTC 8237 / Type A)</name>
    <dbReference type="NCBI Taxonomy" id="195103"/>
    <lineage>
        <taxon>Bacteria</taxon>
        <taxon>Bacillati</taxon>
        <taxon>Bacillota</taxon>
        <taxon>Clostridia</taxon>
        <taxon>Eubacteriales</taxon>
        <taxon>Clostridiaceae</taxon>
        <taxon>Clostridium</taxon>
    </lineage>
</organism>
<dbReference type="EC" id="3.4.21.92" evidence="1"/>
<dbReference type="EMBL" id="CP000246">
    <property type="protein sequence ID" value="ABG83467.1"/>
    <property type="molecule type" value="Genomic_DNA"/>
</dbReference>
<dbReference type="RefSeq" id="WP_003448628.1">
    <property type="nucleotide sequence ID" value="NC_008261.1"/>
</dbReference>
<dbReference type="SMR" id="Q0TQK2"/>
<dbReference type="STRING" id="195103.CPF_1647"/>
<dbReference type="MEROPS" id="S14.001"/>
<dbReference type="PaxDb" id="195103-CPF_1647"/>
<dbReference type="GeneID" id="93002065"/>
<dbReference type="KEGG" id="cpf:CPF_1647"/>
<dbReference type="eggNOG" id="COG0740">
    <property type="taxonomic scope" value="Bacteria"/>
</dbReference>
<dbReference type="HOGENOM" id="CLU_058707_3_2_9"/>
<dbReference type="Proteomes" id="UP000001823">
    <property type="component" value="Chromosome"/>
</dbReference>
<dbReference type="GO" id="GO:0005737">
    <property type="term" value="C:cytoplasm"/>
    <property type="evidence" value="ECO:0007669"/>
    <property type="project" value="UniProtKB-SubCell"/>
</dbReference>
<dbReference type="GO" id="GO:0009368">
    <property type="term" value="C:endopeptidase Clp complex"/>
    <property type="evidence" value="ECO:0007669"/>
    <property type="project" value="TreeGrafter"/>
</dbReference>
<dbReference type="GO" id="GO:0004176">
    <property type="term" value="F:ATP-dependent peptidase activity"/>
    <property type="evidence" value="ECO:0007669"/>
    <property type="project" value="InterPro"/>
</dbReference>
<dbReference type="GO" id="GO:0051117">
    <property type="term" value="F:ATPase binding"/>
    <property type="evidence" value="ECO:0007669"/>
    <property type="project" value="TreeGrafter"/>
</dbReference>
<dbReference type="GO" id="GO:0004252">
    <property type="term" value="F:serine-type endopeptidase activity"/>
    <property type="evidence" value="ECO:0007669"/>
    <property type="project" value="UniProtKB-UniRule"/>
</dbReference>
<dbReference type="GO" id="GO:0006515">
    <property type="term" value="P:protein quality control for misfolded or incompletely synthesized proteins"/>
    <property type="evidence" value="ECO:0007669"/>
    <property type="project" value="TreeGrafter"/>
</dbReference>
<dbReference type="CDD" id="cd07017">
    <property type="entry name" value="S14_ClpP_2"/>
    <property type="match status" value="1"/>
</dbReference>
<dbReference type="FunFam" id="3.90.226.10:FF:000001">
    <property type="entry name" value="ATP-dependent Clp protease proteolytic subunit"/>
    <property type="match status" value="1"/>
</dbReference>
<dbReference type="Gene3D" id="3.90.226.10">
    <property type="entry name" value="2-enoyl-CoA Hydratase, Chain A, domain 1"/>
    <property type="match status" value="1"/>
</dbReference>
<dbReference type="HAMAP" id="MF_00444">
    <property type="entry name" value="ClpP"/>
    <property type="match status" value="1"/>
</dbReference>
<dbReference type="InterPro" id="IPR001907">
    <property type="entry name" value="ClpP"/>
</dbReference>
<dbReference type="InterPro" id="IPR029045">
    <property type="entry name" value="ClpP/crotonase-like_dom_sf"/>
</dbReference>
<dbReference type="InterPro" id="IPR023562">
    <property type="entry name" value="ClpP/TepA"/>
</dbReference>
<dbReference type="InterPro" id="IPR033135">
    <property type="entry name" value="ClpP_His_AS"/>
</dbReference>
<dbReference type="InterPro" id="IPR018215">
    <property type="entry name" value="ClpP_Ser_AS"/>
</dbReference>
<dbReference type="NCBIfam" id="TIGR00493">
    <property type="entry name" value="clpP"/>
    <property type="match status" value="1"/>
</dbReference>
<dbReference type="NCBIfam" id="NF001368">
    <property type="entry name" value="PRK00277.1"/>
    <property type="match status" value="1"/>
</dbReference>
<dbReference type="NCBIfam" id="NF009205">
    <property type="entry name" value="PRK12553.1"/>
    <property type="match status" value="1"/>
</dbReference>
<dbReference type="PANTHER" id="PTHR10381">
    <property type="entry name" value="ATP-DEPENDENT CLP PROTEASE PROTEOLYTIC SUBUNIT"/>
    <property type="match status" value="1"/>
</dbReference>
<dbReference type="PANTHER" id="PTHR10381:SF70">
    <property type="entry name" value="ATP-DEPENDENT CLP PROTEASE PROTEOLYTIC SUBUNIT"/>
    <property type="match status" value="1"/>
</dbReference>
<dbReference type="Pfam" id="PF00574">
    <property type="entry name" value="CLP_protease"/>
    <property type="match status" value="1"/>
</dbReference>
<dbReference type="PRINTS" id="PR00127">
    <property type="entry name" value="CLPPROTEASEP"/>
</dbReference>
<dbReference type="SUPFAM" id="SSF52096">
    <property type="entry name" value="ClpP/crotonase"/>
    <property type="match status" value="1"/>
</dbReference>
<dbReference type="PROSITE" id="PS00382">
    <property type="entry name" value="CLP_PROTEASE_HIS"/>
    <property type="match status" value="1"/>
</dbReference>
<dbReference type="PROSITE" id="PS00381">
    <property type="entry name" value="CLP_PROTEASE_SER"/>
    <property type="match status" value="1"/>
</dbReference>
<gene>
    <name evidence="1" type="primary">clpP</name>
    <name type="ordered locus">CPF_1647</name>
</gene>
<sequence length="194" mass="21540">MSNLVPMVVEQTSKGERSYDIFSRLLKDRIIMLSGEVNDVTANLVVAQLLFLESEDPDKDIHLYINSPGGSITSGMAIYDTMQYIKPDVSTICIGMAASMGAFLLSSGAKGKRFALPNAEIMIHQPLGGFQGQATDIDIHAKRILKIKDKLNQILSENTNQPLEKIKVDVERDYFMEASEAVEYGLIDKVIERK</sequence>
<protein>
    <recommendedName>
        <fullName evidence="1">ATP-dependent Clp protease proteolytic subunit</fullName>
        <ecNumber evidence="1">3.4.21.92</ecNumber>
    </recommendedName>
    <alternativeName>
        <fullName evidence="1">Endopeptidase Clp</fullName>
    </alternativeName>
</protein>
<keyword id="KW-0963">Cytoplasm</keyword>
<keyword id="KW-0378">Hydrolase</keyword>
<keyword id="KW-0645">Protease</keyword>
<keyword id="KW-0720">Serine protease</keyword>
<reference key="1">
    <citation type="journal article" date="2006" name="Genome Res.">
        <title>Skewed genomic variability in strains of the toxigenic bacterial pathogen, Clostridium perfringens.</title>
        <authorList>
            <person name="Myers G.S.A."/>
            <person name="Rasko D.A."/>
            <person name="Cheung J.K."/>
            <person name="Ravel J."/>
            <person name="Seshadri R."/>
            <person name="DeBoy R.T."/>
            <person name="Ren Q."/>
            <person name="Varga J."/>
            <person name="Awad M.M."/>
            <person name="Brinkac L.M."/>
            <person name="Daugherty S.C."/>
            <person name="Haft D.H."/>
            <person name="Dodson R.J."/>
            <person name="Madupu R."/>
            <person name="Nelson W.C."/>
            <person name="Rosovitz M.J."/>
            <person name="Sullivan S.A."/>
            <person name="Khouri H."/>
            <person name="Dimitrov G.I."/>
            <person name="Watkins K.L."/>
            <person name="Mulligan S."/>
            <person name="Benton J."/>
            <person name="Radune D."/>
            <person name="Fisher D.J."/>
            <person name="Atkins H.S."/>
            <person name="Hiscox T."/>
            <person name="Jost B.H."/>
            <person name="Billington S.J."/>
            <person name="Songer J.G."/>
            <person name="McClane B.A."/>
            <person name="Titball R.W."/>
            <person name="Rood J.I."/>
            <person name="Melville S.B."/>
            <person name="Paulsen I.T."/>
        </authorList>
    </citation>
    <scope>NUCLEOTIDE SEQUENCE [LARGE SCALE GENOMIC DNA]</scope>
    <source>
        <strain>ATCC 13124 / DSM 756 / JCM 1290 / NCIMB 6125 / NCTC 8237 / S 107 / Type A</strain>
    </source>
</reference>
<comment type="function">
    <text evidence="1">Cleaves peptides in various proteins in a process that requires ATP hydrolysis. Has a chymotrypsin-like activity. Plays a major role in the degradation of misfolded proteins.</text>
</comment>
<comment type="catalytic activity">
    <reaction evidence="1">
        <text>Hydrolysis of proteins to small peptides in the presence of ATP and magnesium. alpha-casein is the usual test substrate. In the absence of ATP, only oligopeptides shorter than five residues are hydrolyzed (such as succinyl-Leu-Tyr-|-NHMec, and Leu-Tyr-Leu-|-Tyr-Trp, in which cleavage of the -Tyr-|-Leu- and -Tyr-|-Trp bonds also occurs).</text>
        <dbReference type="EC" id="3.4.21.92"/>
    </reaction>
</comment>
<comment type="subunit">
    <text evidence="1">Fourteen ClpP subunits assemble into 2 heptameric rings which stack back to back to give a disk-like structure with a central cavity, resembling the structure of eukaryotic proteasomes.</text>
</comment>
<comment type="subcellular location">
    <subcellularLocation>
        <location evidence="1">Cytoplasm</location>
    </subcellularLocation>
</comment>
<comment type="similarity">
    <text evidence="1">Belongs to the peptidase S14 family.</text>
</comment>
<feature type="chain" id="PRO_1000026085" description="ATP-dependent Clp protease proteolytic subunit">
    <location>
        <begin position="1"/>
        <end position="194"/>
    </location>
</feature>
<feature type="active site" description="Nucleophile" evidence="1">
    <location>
        <position position="99"/>
    </location>
</feature>
<feature type="active site" evidence="1">
    <location>
        <position position="124"/>
    </location>
</feature>